<organism>
    <name type="scientific">Geobacter metallireducens (strain ATCC 53774 / DSM 7210 / GS-15)</name>
    <dbReference type="NCBI Taxonomy" id="269799"/>
    <lineage>
        <taxon>Bacteria</taxon>
        <taxon>Pseudomonadati</taxon>
        <taxon>Thermodesulfobacteriota</taxon>
        <taxon>Desulfuromonadia</taxon>
        <taxon>Geobacterales</taxon>
        <taxon>Geobacteraceae</taxon>
        <taxon>Geobacter</taxon>
    </lineage>
</organism>
<sequence length="210" mass="23001">MATIAIIDYGMGNLRSVQKGFEKVGFEAVVTADPKVVLEAEKVVLPGVGAFRDCMRNLEQGGFVEPILTVIQDGRPFLGICVGMQLLFTDSVEFGLYQGLNVIPGHVLRFPEGMRERGEDLKVPHMGWNQLSIKRRPSAFSDVEDGANVYFVHSFYAKPDEEGVVAATSSYGIDFCAAVWKDNIVATQFHPEKSQAVGLSILKNFALSKA</sequence>
<keyword id="KW-0028">Amino-acid biosynthesis</keyword>
<keyword id="KW-0963">Cytoplasm</keyword>
<keyword id="KW-0315">Glutamine amidotransferase</keyword>
<keyword id="KW-0368">Histidine biosynthesis</keyword>
<keyword id="KW-0378">Hydrolase</keyword>
<keyword id="KW-0456">Lyase</keyword>
<keyword id="KW-1185">Reference proteome</keyword>
<comment type="function">
    <text evidence="1">IGPS catalyzes the conversion of PRFAR and glutamine to IGP, AICAR and glutamate. The HisH subunit catalyzes the hydrolysis of glutamine to glutamate and ammonia as part of the synthesis of IGP and AICAR. The resulting ammonia molecule is channeled to the active site of HisF.</text>
</comment>
<comment type="catalytic activity">
    <reaction evidence="1">
        <text>5-[(5-phospho-1-deoxy-D-ribulos-1-ylimino)methylamino]-1-(5-phospho-beta-D-ribosyl)imidazole-4-carboxamide + L-glutamine = D-erythro-1-(imidazol-4-yl)glycerol 3-phosphate + 5-amino-1-(5-phospho-beta-D-ribosyl)imidazole-4-carboxamide + L-glutamate + H(+)</text>
        <dbReference type="Rhea" id="RHEA:24793"/>
        <dbReference type="ChEBI" id="CHEBI:15378"/>
        <dbReference type="ChEBI" id="CHEBI:29985"/>
        <dbReference type="ChEBI" id="CHEBI:58278"/>
        <dbReference type="ChEBI" id="CHEBI:58359"/>
        <dbReference type="ChEBI" id="CHEBI:58475"/>
        <dbReference type="ChEBI" id="CHEBI:58525"/>
        <dbReference type="EC" id="4.3.2.10"/>
    </reaction>
</comment>
<comment type="catalytic activity">
    <reaction evidence="1">
        <text>L-glutamine + H2O = L-glutamate + NH4(+)</text>
        <dbReference type="Rhea" id="RHEA:15889"/>
        <dbReference type="ChEBI" id="CHEBI:15377"/>
        <dbReference type="ChEBI" id="CHEBI:28938"/>
        <dbReference type="ChEBI" id="CHEBI:29985"/>
        <dbReference type="ChEBI" id="CHEBI:58359"/>
        <dbReference type="EC" id="3.5.1.2"/>
    </reaction>
</comment>
<comment type="pathway">
    <text evidence="1">Amino-acid biosynthesis; L-histidine biosynthesis; L-histidine from 5-phospho-alpha-D-ribose 1-diphosphate: step 5/9.</text>
</comment>
<comment type="subunit">
    <text evidence="1">Heterodimer of HisH and HisF.</text>
</comment>
<comment type="subcellular location">
    <subcellularLocation>
        <location evidence="1">Cytoplasm</location>
    </subcellularLocation>
</comment>
<name>HIS5_GEOMG</name>
<reference key="1">
    <citation type="journal article" date="2009" name="BMC Microbiol.">
        <title>The genome sequence of Geobacter metallireducens: features of metabolism, physiology and regulation common and dissimilar to Geobacter sulfurreducens.</title>
        <authorList>
            <person name="Aklujkar M."/>
            <person name="Krushkal J."/>
            <person name="DiBartolo G."/>
            <person name="Lapidus A."/>
            <person name="Land M.L."/>
            <person name="Lovley D.R."/>
        </authorList>
    </citation>
    <scope>NUCLEOTIDE SEQUENCE [LARGE SCALE GENOMIC DNA]</scope>
    <source>
        <strain>ATCC 53774 / DSM 7210 / GS-15</strain>
    </source>
</reference>
<feature type="chain" id="PRO_0000231724" description="Imidazole glycerol phosphate synthase subunit HisH">
    <location>
        <begin position="1"/>
        <end position="210"/>
    </location>
</feature>
<feature type="domain" description="Glutamine amidotransferase type-1" evidence="1">
    <location>
        <begin position="3"/>
        <end position="210"/>
    </location>
</feature>
<feature type="active site" description="Nucleophile" evidence="1">
    <location>
        <position position="81"/>
    </location>
</feature>
<feature type="active site" evidence="1">
    <location>
        <position position="190"/>
    </location>
</feature>
<feature type="active site" evidence="1">
    <location>
        <position position="192"/>
    </location>
</feature>
<accession>Q39YP4</accession>
<dbReference type="EC" id="4.3.2.10" evidence="1"/>
<dbReference type="EC" id="3.5.1.2" evidence="1"/>
<dbReference type="EMBL" id="CP000148">
    <property type="protein sequence ID" value="ABB30630.1"/>
    <property type="molecule type" value="Genomic_DNA"/>
</dbReference>
<dbReference type="RefSeq" id="WP_004512359.1">
    <property type="nucleotide sequence ID" value="NC_007517.1"/>
</dbReference>
<dbReference type="SMR" id="Q39YP4"/>
<dbReference type="STRING" id="269799.Gmet_0387"/>
<dbReference type="KEGG" id="gme:Gmet_0387"/>
<dbReference type="eggNOG" id="COG0118">
    <property type="taxonomic scope" value="Bacteria"/>
</dbReference>
<dbReference type="HOGENOM" id="CLU_071837_2_2_7"/>
<dbReference type="UniPathway" id="UPA00031">
    <property type="reaction ID" value="UER00010"/>
</dbReference>
<dbReference type="Proteomes" id="UP000007073">
    <property type="component" value="Chromosome"/>
</dbReference>
<dbReference type="GO" id="GO:0005737">
    <property type="term" value="C:cytoplasm"/>
    <property type="evidence" value="ECO:0007669"/>
    <property type="project" value="UniProtKB-SubCell"/>
</dbReference>
<dbReference type="GO" id="GO:0004359">
    <property type="term" value="F:glutaminase activity"/>
    <property type="evidence" value="ECO:0007669"/>
    <property type="project" value="UniProtKB-EC"/>
</dbReference>
<dbReference type="GO" id="GO:0000107">
    <property type="term" value="F:imidazoleglycerol-phosphate synthase activity"/>
    <property type="evidence" value="ECO:0007669"/>
    <property type="project" value="UniProtKB-UniRule"/>
</dbReference>
<dbReference type="GO" id="GO:0016829">
    <property type="term" value="F:lyase activity"/>
    <property type="evidence" value="ECO:0007669"/>
    <property type="project" value="UniProtKB-KW"/>
</dbReference>
<dbReference type="GO" id="GO:0000105">
    <property type="term" value="P:L-histidine biosynthetic process"/>
    <property type="evidence" value="ECO:0007669"/>
    <property type="project" value="UniProtKB-UniRule"/>
</dbReference>
<dbReference type="CDD" id="cd01748">
    <property type="entry name" value="GATase1_IGP_Synthase"/>
    <property type="match status" value="1"/>
</dbReference>
<dbReference type="Gene3D" id="3.40.50.880">
    <property type="match status" value="1"/>
</dbReference>
<dbReference type="HAMAP" id="MF_00278">
    <property type="entry name" value="HisH"/>
    <property type="match status" value="1"/>
</dbReference>
<dbReference type="InterPro" id="IPR029062">
    <property type="entry name" value="Class_I_gatase-like"/>
</dbReference>
<dbReference type="InterPro" id="IPR017926">
    <property type="entry name" value="GATASE"/>
</dbReference>
<dbReference type="InterPro" id="IPR010139">
    <property type="entry name" value="Imidazole-glycPsynth_HisH"/>
</dbReference>
<dbReference type="NCBIfam" id="TIGR01855">
    <property type="entry name" value="IMP_synth_hisH"/>
    <property type="match status" value="1"/>
</dbReference>
<dbReference type="PANTHER" id="PTHR42701">
    <property type="entry name" value="IMIDAZOLE GLYCEROL PHOSPHATE SYNTHASE SUBUNIT HISH"/>
    <property type="match status" value="1"/>
</dbReference>
<dbReference type="PANTHER" id="PTHR42701:SF1">
    <property type="entry name" value="IMIDAZOLE GLYCEROL PHOSPHATE SYNTHASE SUBUNIT HISH"/>
    <property type="match status" value="1"/>
</dbReference>
<dbReference type="Pfam" id="PF00117">
    <property type="entry name" value="GATase"/>
    <property type="match status" value="1"/>
</dbReference>
<dbReference type="PIRSF" id="PIRSF000495">
    <property type="entry name" value="Amidotransf_hisH"/>
    <property type="match status" value="1"/>
</dbReference>
<dbReference type="SUPFAM" id="SSF52317">
    <property type="entry name" value="Class I glutamine amidotransferase-like"/>
    <property type="match status" value="1"/>
</dbReference>
<dbReference type="PROSITE" id="PS51273">
    <property type="entry name" value="GATASE_TYPE_1"/>
    <property type="match status" value="1"/>
</dbReference>
<proteinExistence type="inferred from homology"/>
<gene>
    <name evidence="1" type="primary">hisH</name>
    <name type="ordered locus">Gmet_0387</name>
</gene>
<protein>
    <recommendedName>
        <fullName evidence="1">Imidazole glycerol phosphate synthase subunit HisH</fullName>
        <ecNumber evidence="1">4.3.2.10</ecNumber>
    </recommendedName>
    <alternativeName>
        <fullName evidence="1">IGP synthase glutaminase subunit</fullName>
        <ecNumber evidence="1">3.5.1.2</ecNumber>
    </alternativeName>
    <alternativeName>
        <fullName evidence="1">IGP synthase subunit HisH</fullName>
    </alternativeName>
    <alternativeName>
        <fullName evidence="1">ImGP synthase subunit HisH</fullName>
        <shortName evidence="1">IGPS subunit HisH</shortName>
    </alternativeName>
</protein>
<evidence type="ECO:0000255" key="1">
    <source>
        <dbReference type="HAMAP-Rule" id="MF_00278"/>
    </source>
</evidence>